<protein>
    <recommendedName>
        <fullName>5-methyltetrahydropteroyltriglutamate--homocysteine methyltransferase 3, chloroplastic</fullName>
        <ecNumber>2.1.1.14</ecNumber>
    </recommendedName>
    <alternativeName>
        <fullName>Cobalamin-independent methionine synthase 3</fullName>
        <shortName>AtMS3</shortName>
    </alternativeName>
</protein>
<feature type="transit peptide" description="Chloroplast" evidence="4">
    <location>
        <begin position="1"/>
        <end position="33"/>
    </location>
</feature>
<feature type="chain" id="PRO_0000424357" description="5-methyltetrahydropteroyltriglutamate--homocysteine methyltransferase 3, chloroplastic">
    <location>
        <begin position="34"/>
        <end position="812"/>
    </location>
</feature>
<feature type="region of interest" description="Disordered" evidence="5">
    <location>
        <begin position="13"/>
        <end position="33"/>
    </location>
</feature>
<feature type="region of interest" description="Disordered" evidence="5">
    <location>
        <begin position="430"/>
        <end position="456"/>
    </location>
</feature>
<feature type="compositionally biased region" description="Pro residues" evidence="5">
    <location>
        <begin position="17"/>
        <end position="27"/>
    </location>
</feature>
<feature type="active site" description="Proton donor" evidence="3">
    <location>
        <position position="749"/>
    </location>
</feature>
<feature type="binding site" evidence="3">
    <location>
        <position position="66"/>
    </location>
    <ligand>
        <name>5-methyltetrahydropteroyltri-L-glutamate</name>
        <dbReference type="ChEBI" id="CHEBI:58207"/>
    </ligand>
</feature>
<feature type="binding site" evidence="3">
    <location>
        <position position="164"/>
    </location>
    <ligand>
        <name>5-methyltetrahydropteroyltri-L-glutamate</name>
        <dbReference type="ChEBI" id="CHEBI:58207"/>
    </ligand>
</feature>
<feature type="binding site" evidence="3">
    <location>
        <begin position="485"/>
        <end position="487"/>
    </location>
    <ligand>
        <name>L-homocysteine</name>
        <dbReference type="ChEBI" id="CHEBI:58199"/>
    </ligand>
</feature>
<feature type="binding site" evidence="3">
    <location>
        <begin position="485"/>
        <end position="487"/>
    </location>
    <ligand>
        <name>L-methionine</name>
        <dbReference type="ChEBI" id="CHEBI:57844"/>
    </ligand>
</feature>
<feature type="binding site" evidence="3">
    <location>
        <position position="538"/>
    </location>
    <ligand>
        <name>L-homocysteine</name>
        <dbReference type="ChEBI" id="CHEBI:58199"/>
    </ligand>
</feature>
<feature type="binding site" evidence="3">
    <location>
        <position position="538"/>
    </location>
    <ligand>
        <name>L-methionine</name>
        <dbReference type="ChEBI" id="CHEBI:57844"/>
    </ligand>
</feature>
<feature type="binding site" evidence="3">
    <location>
        <position position="543"/>
    </location>
    <ligand>
        <name>5-methyltetrahydropteroyltri-L-glutamate</name>
        <dbReference type="ChEBI" id="CHEBI:58207"/>
    </ligand>
</feature>
<feature type="binding site" evidence="3">
    <location>
        <position position="566"/>
    </location>
    <ligand>
        <name>5-methyltetrahydropteroyltri-L-glutamate</name>
        <dbReference type="ChEBI" id="CHEBI:58207"/>
    </ligand>
</feature>
<feature type="binding site" evidence="2">
    <location>
        <begin position="569"/>
        <end position="570"/>
    </location>
    <ligand>
        <name>5-methyltetrahydropteroyltri-L-glutamate</name>
        <dbReference type="ChEBI" id="CHEBI:58207"/>
    </ligand>
</feature>
<feature type="binding site" evidence="3">
    <location>
        <position position="615"/>
    </location>
    <ligand>
        <name>5-methyltetrahydropteroyltri-L-glutamate</name>
        <dbReference type="ChEBI" id="CHEBI:58207"/>
    </ligand>
</feature>
<feature type="binding site" evidence="3">
    <location>
        <position position="653"/>
    </location>
    <ligand>
        <name>L-homocysteine</name>
        <dbReference type="ChEBI" id="CHEBI:58199"/>
    </ligand>
</feature>
<feature type="binding site" evidence="3">
    <location>
        <position position="653"/>
    </location>
    <ligand>
        <name>L-methionine</name>
        <dbReference type="ChEBI" id="CHEBI:57844"/>
    </ligand>
</feature>
<feature type="binding site" evidence="2">
    <location>
        <position position="695"/>
    </location>
    <ligand>
        <name>Zn(2+)</name>
        <dbReference type="ChEBI" id="CHEBI:29105"/>
        <label>1</label>
        <note>catalytic</note>
    </ligand>
</feature>
<feature type="binding site" evidence="2">
    <location>
        <position position="697"/>
    </location>
    <ligand>
        <name>Zn(2+)</name>
        <dbReference type="ChEBI" id="CHEBI:29105"/>
        <label>1</label>
        <note>catalytic</note>
    </ligand>
</feature>
<feature type="binding site" evidence="2">
    <location>
        <position position="706"/>
    </location>
    <ligand>
        <name>Zn(2+)</name>
        <dbReference type="ChEBI" id="CHEBI:29105"/>
        <label>2</label>
    </ligand>
</feature>
<feature type="binding site" evidence="2">
    <location>
        <position position="710"/>
    </location>
    <ligand>
        <name>Zn(2+)</name>
        <dbReference type="ChEBI" id="CHEBI:29105"/>
        <label>2</label>
    </ligand>
</feature>
<feature type="binding site" evidence="3">
    <location>
        <position position="719"/>
    </location>
    <ligand>
        <name>Zn(2+)</name>
        <dbReference type="ChEBI" id="CHEBI:29105"/>
        <label>1</label>
        <note>catalytic</note>
    </ligand>
</feature>
<feature type="binding site" evidence="2">
    <location>
        <position position="781"/>
    </location>
    <ligand>
        <name>Zn(2+)</name>
        <dbReference type="ChEBI" id="CHEBI:29105"/>
        <label>1</label>
        <note>catalytic</note>
    </ligand>
</feature>
<feature type="sequence conflict" description="In Ref. 1; CAE55865." evidence="7" ref="1">
    <original>P</original>
    <variation>L</variation>
    <location>
        <position position="11"/>
    </location>
</feature>
<feature type="sequence conflict" description="In Ref. 1; CAE55865." evidence="7" ref="1">
    <original>T</original>
    <variation>S</variation>
    <location>
        <position position="77"/>
    </location>
</feature>
<feature type="sequence conflict" description="In Ref. 1; CAE55865." evidence="7" ref="1">
    <original>A</original>
    <variation>G</variation>
    <location>
        <position position="634"/>
    </location>
</feature>
<accession>Q0WNZ5</accession>
<accession>Q6KCR0</accession>
<comment type="function">
    <text evidence="6">Catalyzes the transfer of a methyl group from 5-methyltetrahydrofolate to homocysteine resulting in methionine formation.</text>
</comment>
<comment type="catalytic activity">
    <reaction>
        <text>5-methyltetrahydropteroyltri-L-glutamate + L-homocysteine = tetrahydropteroyltri-L-glutamate + L-methionine</text>
        <dbReference type="Rhea" id="RHEA:21196"/>
        <dbReference type="ChEBI" id="CHEBI:57844"/>
        <dbReference type="ChEBI" id="CHEBI:58140"/>
        <dbReference type="ChEBI" id="CHEBI:58199"/>
        <dbReference type="ChEBI" id="CHEBI:58207"/>
        <dbReference type="EC" id="2.1.1.14"/>
    </reaction>
</comment>
<comment type="cofactor">
    <cofactor evidence="1">
        <name>Zn(2+)</name>
        <dbReference type="ChEBI" id="CHEBI:29105"/>
    </cofactor>
    <text evidence="1">Binds 2 Zn(2+) ions per subunit.</text>
</comment>
<comment type="biophysicochemical properties">
    <kinetics>
        <KM evidence="6">17 uM for 5-methyltetrahydrofolate</KM>
        <Vmax evidence="6">0.6 nmol/min/mg enzyme toward 5-methyltetrahydrofolate</Vmax>
    </kinetics>
</comment>
<comment type="pathway">
    <text>Amino-acid biosynthesis; L-methionine biosynthesis via de novo pathway; L-methionine from L-homocysteine (MetE route): step 1/1.</text>
</comment>
<comment type="subcellular location">
    <subcellularLocation>
        <location evidence="6">Plastid</location>
        <location evidence="6">Chloroplast</location>
    </subcellularLocation>
</comment>
<comment type="tissue specificity">
    <text evidence="6">Expressed in seeds.</text>
</comment>
<comment type="similarity">
    <text evidence="7">Belongs to the vitamin-B12 independent methionine synthase family.</text>
</comment>
<evidence type="ECO:0000250" key="1"/>
<evidence type="ECO:0000250" key="2">
    <source>
        <dbReference type="UniProtKB" id="O50008"/>
    </source>
</evidence>
<evidence type="ECO:0000250" key="3">
    <source>
        <dbReference type="UniProtKB" id="P82610"/>
    </source>
</evidence>
<evidence type="ECO:0000255" key="4"/>
<evidence type="ECO:0000256" key="5">
    <source>
        <dbReference type="SAM" id="MobiDB-lite"/>
    </source>
</evidence>
<evidence type="ECO:0000269" key="6">
    <source>
    </source>
</evidence>
<evidence type="ECO:0000305" key="7"/>
<organism>
    <name type="scientific">Arabidopsis thaliana</name>
    <name type="common">Mouse-ear cress</name>
    <dbReference type="NCBI Taxonomy" id="3702"/>
    <lineage>
        <taxon>Eukaryota</taxon>
        <taxon>Viridiplantae</taxon>
        <taxon>Streptophyta</taxon>
        <taxon>Embryophyta</taxon>
        <taxon>Tracheophyta</taxon>
        <taxon>Spermatophyta</taxon>
        <taxon>Magnoliopsida</taxon>
        <taxon>eudicotyledons</taxon>
        <taxon>Gunneridae</taxon>
        <taxon>Pentapetalae</taxon>
        <taxon>rosids</taxon>
        <taxon>malvids</taxon>
        <taxon>Brassicales</taxon>
        <taxon>Brassicaceae</taxon>
        <taxon>Camelineae</taxon>
        <taxon>Arabidopsis</taxon>
    </lineage>
</organism>
<proteinExistence type="evidence at protein level"/>
<dbReference type="EC" id="2.1.1.14"/>
<dbReference type="EMBL" id="AJ608675">
    <property type="protein sequence ID" value="CAE55865.1"/>
    <property type="molecule type" value="mRNA"/>
</dbReference>
<dbReference type="EMBL" id="AF296834">
    <property type="status" value="NOT_ANNOTATED_CDS"/>
    <property type="molecule type" value="Genomic_DNA"/>
</dbReference>
<dbReference type="EMBL" id="CP002688">
    <property type="protein sequence ID" value="AED92915.1"/>
    <property type="molecule type" value="Genomic_DNA"/>
</dbReference>
<dbReference type="EMBL" id="CP002688">
    <property type="protein sequence ID" value="AED92916.1"/>
    <property type="molecule type" value="Genomic_DNA"/>
</dbReference>
<dbReference type="EMBL" id="AK229291">
    <property type="protein sequence ID" value="BAF01154.1"/>
    <property type="molecule type" value="mRNA"/>
</dbReference>
<dbReference type="RefSeq" id="NP_001078611.1">
    <property type="nucleotide sequence ID" value="NM_001085142.1"/>
</dbReference>
<dbReference type="RefSeq" id="NP_197598.2">
    <property type="nucleotide sequence ID" value="NM_122107.4"/>
</dbReference>
<dbReference type="SMR" id="Q0WNZ5"/>
<dbReference type="FunCoup" id="Q0WNZ5">
    <property type="interactions" value="1087"/>
</dbReference>
<dbReference type="IntAct" id="Q0WNZ5">
    <property type="interactions" value="1"/>
</dbReference>
<dbReference type="MINT" id="Q0WNZ5"/>
<dbReference type="STRING" id="3702.Q0WNZ5"/>
<dbReference type="GlyGen" id="Q0WNZ5">
    <property type="glycosylation" value="1 site"/>
</dbReference>
<dbReference type="iPTMnet" id="Q0WNZ5"/>
<dbReference type="PaxDb" id="3702-AT5G20980.2"/>
<dbReference type="ProteomicsDB" id="232295"/>
<dbReference type="EnsemblPlants" id="AT5G20980.1">
    <property type="protein sequence ID" value="AT5G20980.1"/>
    <property type="gene ID" value="AT5G20980"/>
</dbReference>
<dbReference type="EnsemblPlants" id="AT5G20980.2">
    <property type="protein sequence ID" value="AT5G20980.2"/>
    <property type="gene ID" value="AT5G20980"/>
</dbReference>
<dbReference type="GeneID" id="832223"/>
<dbReference type="Gramene" id="AT5G20980.1">
    <property type="protein sequence ID" value="AT5G20980.1"/>
    <property type="gene ID" value="AT5G20980"/>
</dbReference>
<dbReference type="Gramene" id="AT5G20980.2">
    <property type="protein sequence ID" value="AT5G20980.2"/>
    <property type="gene ID" value="AT5G20980"/>
</dbReference>
<dbReference type="KEGG" id="ath:AT5G20980"/>
<dbReference type="Araport" id="AT5G20980"/>
<dbReference type="TAIR" id="AT5G20980">
    <property type="gene designation" value="MS3"/>
</dbReference>
<dbReference type="eggNOG" id="KOG2263">
    <property type="taxonomic scope" value="Eukaryota"/>
</dbReference>
<dbReference type="HOGENOM" id="CLU_013175_0_0_1"/>
<dbReference type="InParanoid" id="Q0WNZ5"/>
<dbReference type="OMA" id="GWKNGEI"/>
<dbReference type="PhylomeDB" id="Q0WNZ5"/>
<dbReference type="BioCyc" id="ARA:AT5G20980-MONOMER"/>
<dbReference type="SABIO-RK" id="Q0WNZ5"/>
<dbReference type="UniPathway" id="UPA00051">
    <property type="reaction ID" value="UER00082"/>
</dbReference>
<dbReference type="PRO" id="PR:Q0WNZ5"/>
<dbReference type="Proteomes" id="UP000006548">
    <property type="component" value="Chromosome 5"/>
</dbReference>
<dbReference type="ExpressionAtlas" id="Q0WNZ5">
    <property type="expression patterns" value="baseline and differential"/>
</dbReference>
<dbReference type="GO" id="GO:0009507">
    <property type="term" value="C:chloroplast"/>
    <property type="evidence" value="ECO:0000314"/>
    <property type="project" value="TAIR"/>
</dbReference>
<dbReference type="GO" id="GO:0003871">
    <property type="term" value="F:5-methyltetrahydropteroyltriglutamate-homocysteine S-methyltransferase activity"/>
    <property type="evidence" value="ECO:0007669"/>
    <property type="project" value="UniProtKB-EC"/>
</dbReference>
<dbReference type="GO" id="GO:0008705">
    <property type="term" value="F:methionine synthase activity"/>
    <property type="evidence" value="ECO:0000314"/>
    <property type="project" value="TAIR"/>
</dbReference>
<dbReference type="GO" id="GO:0008270">
    <property type="term" value="F:zinc ion binding"/>
    <property type="evidence" value="ECO:0007669"/>
    <property type="project" value="InterPro"/>
</dbReference>
<dbReference type="GO" id="GO:0009086">
    <property type="term" value="P:methionine biosynthetic process"/>
    <property type="evidence" value="ECO:0000315"/>
    <property type="project" value="TAIR"/>
</dbReference>
<dbReference type="GO" id="GO:0032259">
    <property type="term" value="P:methylation"/>
    <property type="evidence" value="ECO:0007669"/>
    <property type="project" value="UniProtKB-KW"/>
</dbReference>
<dbReference type="CDD" id="cd03311">
    <property type="entry name" value="CIMS_C_terminal_like"/>
    <property type="match status" value="1"/>
</dbReference>
<dbReference type="CDD" id="cd03312">
    <property type="entry name" value="CIMS_N_terminal_like"/>
    <property type="match status" value="1"/>
</dbReference>
<dbReference type="FunFam" id="3.20.20.210:FF:000002">
    <property type="entry name" value="5-methyltetrahydropteroyltriglutamate--homocysteine methyltransferase"/>
    <property type="match status" value="1"/>
</dbReference>
<dbReference type="FunFam" id="3.20.20.210:FF:000003">
    <property type="entry name" value="5-methyltetrahydropteroyltriglutamate--homocysteine methyltransferase"/>
    <property type="match status" value="1"/>
</dbReference>
<dbReference type="Gene3D" id="3.20.20.210">
    <property type="match status" value="2"/>
</dbReference>
<dbReference type="HAMAP" id="MF_00172">
    <property type="entry name" value="Meth_synth"/>
    <property type="match status" value="1"/>
</dbReference>
<dbReference type="InterPro" id="IPR013215">
    <property type="entry name" value="Cbl-indep_Met_Synth_N"/>
</dbReference>
<dbReference type="InterPro" id="IPR006276">
    <property type="entry name" value="Cobalamin-indep_Met_synthase"/>
</dbReference>
<dbReference type="InterPro" id="IPR002629">
    <property type="entry name" value="Met_Synth_C/arc"/>
</dbReference>
<dbReference type="InterPro" id="IPR038071">
    <property type="entry name" value="UROD/MetE-like_sf"/>
</dbReference>
<dbReference type="NCBIfam" id="TIGR01371">
    <property type="entry name" value="met_syn_B12ind"/>
    <property type="match status" value="1"/>
</dbReference>
<dbReference type="NCBIfam" id="NF003556">
    <property type="entry name" value="PRK05222.1"/>
    <property type="match status" value="1"/>
</dbReference>
<dbReference type="PANTHER" id="PTHR30519">
    <property type="entry name" value="5-METHYLTETRAHYDROPTEROYLTRIGLUTAMATE--HOMOCYSTEINE METHYLTRANSFERASE"/>
    <property type="match status" value="1"/>
</dbReference>
<dbReference type="Pfam" id="PF08267">
    <property type="entry name" value="Meth_synt_1"/>
    <property type="match status" value="1"/>
</dbReference>
<dbReference type="Pfam" id="PF01717">
    <property type="entry name" value="Meth_synt_2"/>
    <property type="match status" value="1"/>
</dbReference>
<dbReference type="PIRSF" id="PIRSF000382">
    <property type="entry name" value="MeTrfase_B12_ind"/>
    <property type="match status" value="1"/>
</dbReference>
<dbReference type="SUPFAM" id="SSF51726">
    <property type="entry name" value="UROD/MetE-like"/>
    <property type="match status" value="2"/>
</dbReference>
<gene>
    <name type="primary">MS3</name>
    <name type="ordered locus">At5g20980</name>
    <name type="ORF">F22D1</name>
</gene>
<name>METE3_ARATH</name>
<keyword id="KW-0028">Amino-acid biosynthesis</keyword>
<keyword id="KW-0150">Chloroplast</keyword>
<keyword id="KW-0479">Metal-binding</keyword>
<keyword id="KW-0486">Methionine biosynthesis</keyword>
<keyword id="KW-0489">Methyltransferase</keyword>
<keyword id="KW-0934">Plastid</keyword>
<keyword id="KW-1185">Reference proteome</keyword>
<keyword id="KW-0808">Transferase</keyword>
<keyword id="KW-0809">Transit peptide</keyword>
<keyword id="KW-0862">Zinc</keyword>
<reference key="1">
    <citation type="journal article" date="2004" name="J. Biol. Chem.">
        <title>Methionine metabolism in plants: chloroplasts are autonomous for de novo methionine synthesis and can import S-adenosylmethionine from the cytosol.</title>
        <authorList>
            <person name="Ravanel S."/>
            <person name="Block M.A."/>
            <person name="Rippert P."/>
            <person name="Jabrin S."/>
            <person name="Curien G."/>
            <person name="Rebeille F."/>
            <person name="Douce R."/>
        </authorList>
    </citation>
    <scope>NUCLEOTIDE SEQUENCE [MRNA]</scope>
    <scope>FUNCTION</scope>
    <scope>BIOPHYSICOCHEMICAL PROPERTIES</scope>
    <scope>SUBCELLULAR LOCATION</scope>
    <scope>TISSUE SPECIFICITY</scope>
    <source>
        <strain>cv. Wassilewskija</strain>
    </source>
</reference>
<reference key="2">
    <citation type="journal article" date="2000" name="Nature">
        <title>Sequence and analysis of chromosome 5 of the plant Arabidopsis thaliana.</title>
        <authorList>
            <person name="Tabata S."/>
            <person name="Kaneko T."/>
            <person name="Nakamura Y."/>
            <person name="Kotani H."/>
            <person name="Kato T."/>
            <person name="Asamizu E."/>
            <person name="Miyajima N."/>
            <person name="Sasamoto S."/>
            <person name="Kimura T."/>
            <person name="Hosouchi T."/>
            <person name="Kawashima K."/>
            <person name="Kohara M."/>
            <person name="Matsumoto M."/>
            <person name="Matsuno A."/>
            <person name="Muraki A."/>
            <person name="Nakayama S."/>
            <person name="Nakazaki N."/>
            <person name="Naruo K."/>
            <person name="Okumura S."/>
            <person name="Shinpo S."/>
            <person name="Takeuchi C."/>
            <person name="Wada T."/>
            <person name="Watanabe A."/>
            <person name="Yamada M."/>
            <person name="Yasuda M."/>
            <person name="Sato S."/>
            <person name="de la Bastide M."/>
            <person name="Huang E."/>
            <person name="Spiegel L."/>
            <person name="Gnoj L."/>
            <person name="O'Shaughnessy A."/>
            <person name="Preston R."/>
            <person name="Habermann K."/>
            <person name="Murray J."/>
            <person name="Johnson D."/>
            <person name="Rohlfing T."/>
            <person name="Nelson J."/>
            <person name="Stoneking T."/>
            <person name="Pepin K."/>
            <person name="Spieth J."/>
            <person name="Sekhon M."/>
            <person name="Armstrong J."/>
            <person name="Becker M."/>
            <person name="Belter E."/>
            <person name="Cordum H."/>
            <person name="Cordes M."/>
            <person name="Courtney L."/>
            <person name="Courtney W."/>
            <person name="Dante M."/>
            <person name="Du H."/>
            <person name="Edwards J."/>
            <person name="Fryman J."/>
            <person name="Haakensen B."/>
            <person name="Lamar E."/>
            <person name="Latreille P."/>
            <person name="Leonard S."/>
            <person name="Meyer R."/>
            <person name="Mulvaney E."/>
            <person name="Ozersky P."/>
            <person name="Riley A."/>
            <person name="Strowmatt C."/>
            <person name="Wagner-McPherson C."/>
            <person name="Wollam A."/>
            <person name="Yoakum M."/>
            <person name="Bell M."/>
            <person name="Dedhia N."/>
            <person name="Parnell L."/>
            <person name="Shah R."/>
            <person name="Rodriguez M."/>
            <person name="Hoon See L."/>
            <person name="Vil D."/>
            <person name="Baker J."/>
            <person name="Kirchoff K."/>
            <person name="Toth K."/>
            <person name="King L."/>
            <person name="Bahret A."/>
            <person name="Miller B."/>
            <person name="Marra M.A."/>
            <person name="Martienssen R."/>
            <person name="McCombie W.R."/>
            <person name="Wilson R.K."/>
            <person name="Murphy G."/>
            <person name="Bancroft I."/>
            <person name="Volckaert G."/>
            <person name="Wambutt R."/>
            <person name="Duesterhoeft A."/>
            <person name="Stiekema W."/>
            <person name="Pohl T."/>
            <person name="Entian K.-D."/>
            <person name="Terryn N."/>
            <person name="Hartley N."/>
            <person name="Bent E."/>
            <person name="Johnson S."/>
            <person name="Langham S.-A."/>
            <person name="McCullagh B."/>
            <person name="Robben J."/>
            <person name="Grymonprez B."/>
            <person name="Zimmermann W."/>
            <person name="Ramsperger U."/>
            <person name="Wedler H."/>
            <person name="Balke K."/>
            <person name="Wedler E."/>
            <person name="Peters S."/>
            <person name="van Staveren M."/>
            <person name="Dirkse W."/>
            <person name="Mooijman P."/>
            <person name="Klein Lankhorst R."/>
            <person name="Weitzenegger T."/>
            <person name="Bothe G."/>
            <person name="Rose M."/>
            <person name="Hauf J."/>
            <person name="Berneiser S."/>
            <person name="Hempel S."/>
            <person name="Feldpausch M."/>
            <person name="Lamberth S."/>
            <person name="Villarroel R."/>
            <person name="Gielen J."/>
            <person name="Ardiles W."/>
            <person name="Bents O."/>
            <person name="Lemcke K."/>
            <person name="Kolesov G."/>
            <person name="Mayer K.F.X."/>
            <person name="Rudd S."/>
            <person name="Schoof H."/>
            <person name="Schueller C."/>
            <person name="Zaccaria P."/>
            <person name="Mewes H.-W."/>
            <person name="Bevan M."/>
            <person name="Fransz P.F."/>
        </authorList>
    </citation>
    <scope>NUCLEOTIDE SEQUENCE [LARGE SCALE GENOMIC DNA]</scope>
    <source>
        <strain>cv. Columbia</strain>
    </source>
</reference>
<reference key="3">
    <citation type="journal article" date="2017" name="Plant J.">
        <title>Araport11: a complete reannotation of the Arabidopsis thaliana reference genome.</title>
        <authorList>
            <person name="Cheng C.Y."/>
            <person name="Krishnakumar V."/>
            <person name="Chan A.P."/>
            <person name="Thibaud-Nissen F."/>
            <person name="Schobel S."/>
            <person name="Town C.D."/>
        </authorList>
    </citation>
    <scope>GENOME REANNOTATION</scope>
    <source>
        <strain>cv. Columbia</strain>
    </source>
</reference>
<reference key="4">
    <citation type="submission" date="2006-07" db="EMBL/GenBank/DDBJ databases">
        <title>Large-scale analysis of RIKEN Arabidopsis full-length (RAFL) cDNAs.</title>
        <authorList>
            <person name="Totoki Y."/>
            <person name="Seki M."/>
            <person name="Ishida J."/>
            <person name="Nakajima M."/>
            <person name="Enju A."/>
            <person name="Kamiya A."/>
            <person name="Narusaka M."/>
            <person name="Shin-i T."/>
            <person name="Nakagawa M."/>
            <person name="Sakamoto N."/>
            <person name="Oishi K."/>
            <person name="Kohara Y."/>
            <person name="Kobayashi M."/>
            <person name="Toyoda A."/>
            <person name="Sakaki Y."/>
            <person name="Sakurai T."/>
            <person name="Iida K."/>
            <person name="Akiyama K."/>
            <person name="Satou M."/>
            <person name="Toyoda T."/>
            <person name="Konagaya A."/>
            <person name="Carninci P."/>
            <person name="Kawai J."/>
            <person name="Hayashizaki Y."/>
            <person name="Shinozaki K."/>
        </authorList>
    </citation>
    <scope>NUCLEOTIDE SEQUENCE [LARGE SCALE MRNA]</scope>
    <source>
        <strain>cv. Columbia</strain>
    </source>
</reference>
<sequence length="812" mass="90594">MGQLALQRLQPLASLPRRPPSLPPPSSATPSLPCATASRRPRFYVARAMSSHIVGYPRIGPKRELKFALESFWDGKTNVDDLQNVAANLRKSIWKHMAHAGIKYIPSNTFSYYDQMLDTTAMLGAVPSRYGWESGEIGFDVYFSMARGNASAHAMEMTKWFDTNYHYIVPELGPDVNFSYASHKAVVEFKEAKALGIDTVPVLIGPMTYLLLSKPAKGVEKSFCLLSLIDKILPVYKEVLADLKSAGARWIQFDEPILVMDLDTSQLQAFSDAYSHMESSLAGLNVLIATYFADVPAEAYKTLMSLKCVTGFGFDLVRGLETLDLIKMNFPRGKLLFAGVVDGRNIWANDLSASLKTLQTLEDIVGKEKVVVSTSCSLLHTAVDLVNEMKLDKELKSWLAFAAQKVVEVNALAKSFSGAKDEALFSSNSMRQASRRSSPRVTNAAVQQDVDAVKKSDHHRSTEVSVRLQAQQKKLNLPALPTTTIGSFPQTTDLRRIRREFKAKKISEVDYVQTIKEEYEKVIKLQEELGIDVLVHGEAERNDMVEFFGEQLSGFAFTSNGWVQSYGSRCVKPPIIYGDITRPKAMTVFWSSMAQKMTQRPMKGMLTGPVTILNWSFVRNDQPRHETCFQIALAIKDEVEDLEKAGVTVIQIDEAALREGLPLRKSEQKFYLDWAVHAFRITNSGVQDSTQIHTHMCYSNFNDIIHSIIDMDADVITIENSRSDEKLLSVFHEGVKYGAGIGPGVYDIHSPRIPSTEEIAERINKMLAVLDSKVLWVNPDCGLKTRNYSEVKSALSNMVAAAKLIRSQLNKS</sequence>